<organism>
    <name type="scientific">Rhinoceros unicornis</name>
    <name type="common">Greater Indian rhinoceros</name>
    <dbReference type="NCBI Taxonomy" id="9809"/>
    <lineage>
        <taxon>Eukaryota</taxon>
        <taxon>Metazoa</taxon>
        <taxon>Chordata</taxon>
        <taxon>Craniata</taxon>
        <taxon>Vertebrata</taxon>
        <taxon>Euteleostomi</taxon>
        <taxon>Mammalia</taxon>
        <taxon>Eutheria</taxon>
        <taxon>Laurasiatheria</taxon>
        <taxon>Perissodactyla</taxon>
        <taxon>Rhinocerotidae</taxon>
        <taxon>Rhinoceros</taxon>
    </lineage>
</organism>
<keyword id="KW-0249">Electron transport</keyword>
<keyword id="KW-0472">Membrane</keyword>
<keyword id="KW-0496">Mitochondrion</keyword>
<keyword id="KW-0999">Mitochondrion inner membrane</keyword>
<keyword id="KW-0520">NAD</keyword>
<keyword id="KW-0679">Respiratory chain</keyword>
<keyword id="KW-1278">Translocase</keyword>
<keyword id="KW-0812">Transmembrane</keyword>
<keyword id="KW-1133">Transmembrane helix</keyword>
<keyword id="KW-0813">Transport</keyword>
<keyword id="KW-0830">Ubiquinone</keyword>
<gene>
    <name type="primary">MT-ND1</name>
    <name type="synonym">MTND1</name>
    <name type="synonym">NADH1</name>
    <name type="synonym">ND1</name>
</gene>
<accession>Q96189</accession>
<proteinExistence type="inferred from homology"/>
<geneLocation type="mitochondrion"/>
<protein>
    <recommendedName>
        <fullName>NADH-ubiquinone oxidoreductase chain 1</fullName>
        <ecNumber>7.1.1.2</ecNumber>
    </recommendedName>
    <alternativeName>
        <fullName>NADH dehydrogenase subunit 1</fullName>
    </alternativeName>
</protein>
<sequence length="318" mass="35848">MFTINILLLIIPILLAVAFLTLVERKVLGYMQLRKGPNIVGPYGLLQPIADAIKLFTKEPLQPSTSSTSMFIIAPIMALTLALTMWVPLPMPHPLINMNLGVLFMLAMSSLAVYSILWSGWASNSKYALIGALRAVAQTISYEVTLAIILLSVLLMNGSFTLSTLITTQEHLWLIFPSWPLTMMWFISTLAETNRAPFDLTEGESELVSGFNVEYAAGPFALFFMAEYTNIIMMNAFTTILFLGAFHNPYMPELYTVNFTIKTLLLTISFLWIRASYPRFRYDQLMHLLWKNFLPLTLALCMWHVSLPITMSSIPPQT</sequence>
<reference key="1">
    <citation type="journal article" date="1996" name="Mol. Biol. Evol.">
        <title>The complete mitochondrial DNA sequence of the greater Indian rhinoceros, Rhinoceros unicornis, and the Phylogenetic relationship among Carnivora, Perissodactyla, and Artiodactyla (+ Cetacea).</title>
        <authorList>
            <person name="Xu X."/>
            <person name="Janke A."/>
            <person name="Arnason U."/>
        </authorList>
    </citation>
    <scope>NUCLEOTIDE SEQUENCE [GENOMIC DNA]</scope>
    <source>
        <tissue>Kidney</tissue>
    </source>
</reference>
<evidence type="ECO:0000250" key="1"/>
<evidence type="ECO:0000255" key="2"/>
<evidence type="ECO:0000305" key="3"/>
<feature type="chain" id="PRO_0000117470" description="NADH-ubiquinone oxidoreductase chain 1">
    <location>
        <begin position="1"/>
        <end position="318"/>
    </location>
</feature>
<feature type="transmembrane region" description="Helical" evidence="2">
    <location>
        <begin position="2"/>
        <end position="22"/>
    </location>
</feature>
<feature type="transmembrane region" description="Helical" evidence="2">
    <location>
        <begin position="70"/>
        <end position="90"/>
    </location>
</feature>
<feature type="transmembrane region" description="Helical" evidence="2">
    <location>
        <begin position="100"/>
        <end position="120"/>
    </location>
</feature>
<feature type="transmembrane region" description="Helical" evidence="2">
    <location>
        <begin position="146"/>
        <end position="166"/>
    </location>
</feature>
<feature type="transmembrane region" description="Helical" evidence="2">
    <location>
        <begin position="171"/>
        <end position="191"/>
    </location>
</feature>
<feature type="transmembrane region" description="Helical" evidence="2">
    <location>
        <begin position="222"/>
        <end position="242"/>
    </location>
</feature>
<feature type="transmembrane region" description="Helical" evidence="2">
    <location>
        <begin position="253"/>
        <end position="273"/>
    </location>
</feature>
<feature type="transmembrane region" description="Helical" evidence="2">
    <location>
        <begin position="294"/>
        <end position="314"/>
    </location>
</feature>
<name>NU1M_RHIUN</name>
<dbReference type="EC" id="7.1.1.2"/>
<dbReference type="EMBL" id="X97336">
    <property type="protein sequence ID" value="CAA66001.1"/>
    <property type="molecule type" value="Genomic_DNA"/>
</dbReference>
<dbReference type="PIR" id="T11247">
    <property type="entry name" value="T11247"/>
</dbReference>
<dbReference type="RefSeq" id="NP_007368.1">
    <property type="nucleotide sequence ID" value="NC_001779.1"/>
</dbReference>
<dbReference type="SMR" id="Q96189"/>
<dbReference type="GeneID" id="808052"/>
<dbReference type="CTD" id="4535"/>
<dbReference type="GO" id="GO:0005743">
    <property type="term" value="C:mitochondrial inner membrane"/>
    <property type="evidence" value="ECO:0007669"/>
    <property type="project" value="UniProtKB-SubCell"/>
</dbReference>
<dbReference type="GO" id="GO:0008137">
    <property type="term" value="F:NADH dehydrogenase (ubiquinone) activity"/>
    <property type="evidence" value="ECO:0007669"/>
    <property type="project" value="UniProtKB-EC"/>
</dbReference>
<dbReference type="GO" id="GO:0009060">
    <property type="term" value="P:aerobic respiration"/>
    <property type="evidence" value="ECO:0007669"/>
    <property type="project" value="TreeGrafter"/>
</dbReference>
<dbReference type="HAMAP" id="MF_01350">
    <property type="entry name" value="NDH1_NuoH"/>
    <property type="match status" value="1"/>
</dbReference>
<dbReference type="InterPro" id="IPR001694">
    <property type="entry name" value="NADH_UbQ_OxRdtase_su1/FPO"/>
</dbReference>
<dbReference type="InterPro" id="IPR018086">
    <property type="entry name" value="NADH_UbQ_OxRdtase_su1_CS"/>
</dbReference>
<dbReference type="PANTHER" id="PTHR11432">
    <property type="entry name" value="NADH DEHYDROGENASE SUBUNIT 1"/>
    <property type="match status" value="1"/>
</dbReference>
<dbReference type="PANTHER" id="PTHR11432:SF3">
    <property type="entry name" value="NADH-UBIQUINONE OXIDOREDUCTASE CHAIN 1"/>
    <property type="match status" value="1"/>
</dbReference>
<dbReference type="Pfam" id="PF00146">
    <property type="entry name" value="NADHdh"/>
    <property type="match status" value="1"/>
</dbReference>
<dbReference type="PROSITE" id="PS00667">
    <property type="entry name" value="COMPLEX1_ND1_1"/>
    <property type="match status" value="1"/>
</dbReference>
<dbReference type="PROSITE" id="PS00668">
    <property type="entry name" value="COMPLEX1_ND1_2"/>
    <property type="match status" value="1"/>
</dbReference>
<comment type="function">
    <text evidence="1">Core subunit of the mitochondrial membrane respiratory chain NADH dehydrogenase (Complex I) that is believed to belong to the minimal assembly required for catalysis. Complex I functions in the transfer of electrons from NADH to the respiratory chain. The immediate electron acceptor for the enzyme is believed to be ubiquinone (By similarity).</text>
</comment>
<comment type="catalytic activity">
    <reaction>
        <text>a ubiquinone + NADH + 5 H(+)(in) = a ubiquinol + NAD(+) + 4 H(+)(out)</text>
        <dbReference type="Rhea" id="RHEA:29091"/>
        <dbReference type="Rhea" id="RHEA-COMP:9565"/>
        <dbReference type="Rhea" id="RHEA-COMP:9566"/>
        <dbReference type="ChEBI" id="CHEBI:15378"/>
        <dbReference type="ChEBI" id="CHEBI:16389"/>
        <dbReference type="ChEBI" id="CHEBI:17976"/>
        <dbReference type="ChEBI" id="CHEBI:57540"/>
        <dbReference type="ChEBI" id="CHEBI:57945"/>
        <dbReference type="EC" id="7.1.1.2"/>
    </reaction>
</comment>
<comment type="subcellular location">
    <subcellularLocation>
        <location evidence="1">Mitochondrion inner membrane</location>
        <topology evidence="1">Multi-pass membrane protein</topology>
    </subcellularLocation>
</comment>
<comment type="similarity">
    <text evidence="3">Belongs to the complex I subunit 1 family.</text>
</comment>